<keyword id="KW-1003">Cell membrane</keyword>
<keyword id="KW-0472">Membrane</keyword>
<keyword id="KW-1185">Reference proteome</keyword>
<keyword id="KW-0732">Signal</keyword>
<gene>
    <name evidence="4" type="primary">POQ</name>
    <name evidence="5" type="ordered locus">At5g16220</name>
    <name evidence="6" type="ORF">T21H19.140</name>
</gene>
<comment type="function">
    <text evidence="3">Collaboratively with SUB and QKY, regulates cell growth anisotropy during gynoecium development, thus linking together cell-cell communication and cellular growth.</text>
</comment>
<comment type="subunit">
    <text evidence="3">Homodimer (PubMed:24173806). Interacts with QKY and SUB/SCM at the plasma membrane (PubMed:24173806).</text>
</comment>
<comment type="subcellular location">
    <subcellularLocation>
        <location evidence="3">Cell membrane</location>
    </subcellularLocation>
    <subcellularLocation>
        <location evidence="3">Endomembrane system</location>
    </subcellularLocation>
    <text evidence="3">Localized in small cytoplasmic compartments.</text>
</comment>
<comment type="tissue specificity">
    <text evidence="3">Observed in seedlings, roots, shoots, leaves, stems, inflorescence and flowers.</text>
</comment>
<comment type="disruption phenotype">
    <text evidence="3">No visible phenotype (PubMed:24173806). Double mutants sub/scm poq and qky poq have a stronger pistil twisting than single mutants (PubMed:24173806). The triple mutant qky sub/scm poq has a dramatic pistil twisting phenotype due to defects of valve cell growth anisotropy (PubMed:24173806).</text>
</comment>
<reference key="1">
    <citation type="journal article" date="2000" name="Nature">
        <title>Sequence and analysis of chromosome 5 of the plant Arabidopsis thaliana.</title>
        <authorList>
            <person name="Tabata S."/>
            <person name="Kaneko T."/>
            <person name="Nakamura Y."/>
            <person name="Kotani H."/>
            <person name="Kato T."/>
            <person name="Asamizu E."/>
            <person name="Miyajima N."/>
            <person name="Sasamoto S."/>
            <person name="Kimura T."/>
            <person name="Hosouchi T."/>
            <person name="Kawashima K."/>
            <person name="Kohara M."/>
            <person name="Matsumoto M."/>
            <person name="Matsuno A."/>
            <person name="Muraki A."/>
            <person name="Nakayama S."/>
            <person name="Nakazaki N."/>
            <person name="Naruo K."/>
            <person name="Okumura S."/>
            <person name="Shinpo S."/>
            <person name="Takeuchi C."/>
            <person name="Wada T."/>
            <person name="Watanabe A."/>
            <person name="Yamada M."/>
            <person name="Yasuda M."/>
            <person name="Sato S."/>
            <person name="de la Bastide M."/>
            <person name="Huang E."/>
            <person name="Spiegel L."/>
            <person name="Gnoj L."/>
            <person name="O'Shaughnessy A."/>
            <person name="Preston R."/>
            <person name="Habermann K."/>
            <person name="Murray J."/>
            <person name="Johnson D."/>
            <person name="Rohlfing T."/>
            <person name="Nelson J."/>
            <person name="Stoneking T."/>
            <person name="Pepin K."/>
            <person name="Spieth J."/>
            <person name="Sekhon M."/>
            <person name="Armstrong J."/>
            <person name="Becker M."/>
            <person name="Belter E."/>
            <person name="Cordum H."/>
            <person name="Cordes M."/>
            <person name="Courtney L."/>
            <person name="Courtney W."/>
            <person name="Dante M."/>
            <person name="Du H."/>
            <person name="Edwards J."/>
            <person name="Fryman J."/>
            <person name="Haakensen B."/>
            <person name="Lamar E."/>
            <person name="Latreille P."/>
            <person name="Leonard S."/>
            <person name="Meyer R."/>
            <person name="Mulvaney E."/>
            <person name="Ozersky P."/>
            <person name="Riley A."/>
            <person name="Strowmatt C."/>
            <person name="Wagner-McPherson C."/>
            <person name="Wollam A."/>
            <person name="Yoakum M."/>
            <person name="Bell M."/>
            <person name="Dedhia N."/>
            <person name="Parnell L."/>
            <person name="Shah R."/>
            <person name="Rodriguez M."/>
            <person name="Hoon See L."/>
            <person name="Vil D."/>
            <person name="Baker J."/>
            <person name="Kirchoff K."/>
            <person name="Toth K."/>
            <person name="King L."/>
            <person name="Bahret A."/>
            <person name="Miller B."/>
            <person name="Marra M.A."/>
            <person name="Martienssen R."/>
            <person name="McCombie W.R."/>
            <person name="Wilson R.K."/>
            <person name="Murphy G."/>
            <person name="Bancroft I."/>
            <person name="Volckaert G."/>
            <person name="Wambutt R."/>
            <person name="Duesterhoeft A."/>
            <person name="Stiekema W."/>
            <person name="Pohl T."/>
            <person name="Entian K.-D."/>
            <person name="Terryn N."/>
            <person name="Hartley N."/>
            <person name="Bent E."/>
            <person name="Johnson S."/>
            <person name="Langham S.-A."/>
            <person name="McCullagh B."/>
            <person name="Robben J."/>
            <person name="Grymonprez B."/>
            <person name="Zimmermann W."/>
            <person name="Ramsperger U."/>
            <person name="Wedler H."/>
            <person name="Balke K."/>
            <person name="Wedler E."/>
            <person name="Peters S."/>
            <person name="van Staveren M."/>
            <person name="Dirkse W."/>
            <person name="Mooijman P."/>
            <person name="Klein Lankhorst R."/>
            <person name="Weitzenegger T."/>
            <person name="Bothe G."/>
            <person name="Rose M."/>
            <person name="Hauf J."/>
            <person name="Berneiser S."/>
            <person name="Hempel S."/>
            <person name="Feldpausch M."/>
            <person name="Lamberth S."/>
            <person name="Villarroel R."/>
            <person name="Gielen J."/>
            <person name="Ardiles W."/>
            <person name="Bents O."/>
            <person name="Lemcke K."/>
            <person name="Kolesov G."/>
            <person name="Mayer K.F.X."/>
            <person name="Rudd S."/>
            <person name="Schoof H."/>
            <person name="Schueller C."/>
            <person name="Zaccaria P."/>
            <person name="Mewes H.-W."/>
            <person name="Bevan M."/>
            <person name="Fransz P.F."/>
        </authorList>
    </citation>
    <scope>NUCLEOTIDE SEQUENCE [LARGE SCALE GENOMIC DNA]</scope>
    <source>
        <strain>cv. Columbia</strain>
    </source>
</reference>
<reference key="2">
    <citation type="journal article" date="2017" name="Plant J.">
        <title>Araport11: a complete reannotation of the Arabidopsis thaliana reference genome.</title>
        <authorList>
            <person name="Cheng C.Y."/>
            <person name="Krishnakumar V."/>
            <person name="Chan A.P."/>
            <person name="Thibaud-Nissen F."/>
            <person name="Schobel S."/>
            <person name="Town C.D."/>
        </authorList>
    </citation>
    <scope>GENOME REANNOTATION</scope>
    <source>
        <strain>cv. Columbia</strain>
    </source>
</reference>
<reference key="3">
    <citation type="journal article" date="2003" name="Science">
        <title>Empirical analysis of transcriptional activity in the Arabidopsis genome.</title>
        <authorList>
            <person name="Yamada K."/>
            <person name="Lim J."/>
            <person name="Dale J.M."/>
            <person name="Chen H."/>
            <person name="Shinn P."/>
            <person name="Palm C.J."/>
            <person name="Southwick A.M."/>
            <person name="Wu H.C."/>
            <person name="Kim C.J."/>
            <person name="Nguyen M."/>
            <person name="Pham P.K."/>
            <person name="Cheuk R.F."/>
            <person name="Karlin-Newmann G."/>
            <person name="Liu S.X."/>
            <person name="Lam B."/>
            <person name="Sakano H."/>
            <person name="Wu T."/>
            <person name="Yu G."/>
            <person name="Miranda M."/>
            <person name="Quach H.L."/>
            <person name="Tripp M."/>
            <person name="Chang C.H."/>
            <person name="Lee J.M."/>
            <person name="Toriumi M.J."/>
            <person name="Chan M.M."/>
            <person name="Tang C.C."/>
            <person name="Onodera C.S."/>
            <person name="Deng J.M."/>
            <person name="Akiyama K."/>
            <person name="Ansari Y."/>
            <person name="Arakawa T."/>
            <person name="Banh J."/>
            <person name="Banno F."/>
            <person name="Bowser L."/>
            <person name="Brooks S.Y."/>
            <person name="Carninci P."/>
            <person name="Chao Q."/>
            <person name="Choy N."/>
            <person name="Enju A."/>
            <person name="Goldsmith A.D."/>
            <person name="Gurjal M."/>
            <person name="Hansen N.F."/>
            <person name="Hayashizaki Y."/>
            <person name="Johnson-Hopson C."/>
            <person name="Hsuan V.W."/>
            <person name="Iida K."/>
            <person name="Karnes M."/>
            <person name="Khan S."/>
            <person name="Koesema E."/>
            <person name="Ishida J."/>
            <person name="Jiang P.X."/>
            <person name="Jones T."/>
            <person name="Kawai J."/>
            <person name="Kamiya A."/>
            <person name="Meyers C."/>
            <person name="Nakajima M."/>
            <person name="Narusaka M."/>
            <person name="Seki M."/>
            <person name="Sakurai T."/>
            <person name="Satou M."/>
            <person name="Tamse R."/>
            <person name="Vaysberg M."/>
            <person name="Wallender E.K."/>
            <person name="Wong C."/>
            <person name="Yamamura Y."/>
            <person name="Yuan S."/>
            <person name="Shinozaki K."/>
            <person name="Davis R.W."/>
            <person name="Theologis A."/>
            <person name="Ecker J.R."/>
        </authorList>
    </citation>
    <scope>NUCLEOTIDE SEQUENCE [LARGE SCALE MRNA]</scope>
    <source>
        <strain>cv. Columbia</strain>
    </source>
</reference>
<reference key="4">
    <citation type="journal article" date="2012" name="Mol. Cell. Proteomics">
        <title>Comparative large-scale characterisation of plant vs. mammal proteins reveals similar and idiosyncratic N-alpha acetylation features.</title>
        <authorList>
            <person name="Bienvenut W.V."/>
            <person name="Sumpton D."/>
            <person name="Martinez A."/>
            <person name="Lilla S."/>
            <person name="Espagne C."/>
            <person name="Meinnel T."/>
            <person name="Giglione C."/>
        </authorList>
    </citation>
    <scope>IDENTIFICATION BY MASS SPECTROMETRY [LARGE SCALE ANALYSIS]</scope>
</reference>
<reference key="5">
    <citation type="journal article" date="2013" name="Development">
        <title>QUIRKY interacts with STRUBBELIG and PAL OF QUIRKY to regulate cell growth anisotropy during Arabidopsis gynoecium development.</title>
        <authorList>
            <person name="Trehin C."/>
            <person name="Schrempp S."/>
            <person name="Chauvet A."/>
            <person name="Berne-Dedieu A."/>
            <person name="Thierry A.-M."/>
            <person name="Faure J.-E."/>
            <person name="Negrutiu I."/>
            <person name="Morel P."/>
        </authorList>
    </citation>
    <scope>FUNCTION</scope>
    <scope>DISRUPTION PHENOTYPE</scope>
    <scope>INTERACTION WITH QKY AND SUB/SCM</scope>
    <scope>SUBCELLULAR LOCATION</scope>
    <scope>TISSUE SPECIFICITY</scope>
    <scope>HOMODIMER</scope>
    <source>
        <strain>cv. C24</strain>
        <strain>cv. Columbia</strain>
    </source>
</reference>
<organism>
    <name type="scientific">Arabidopsis thaliana</name>
    <name type="common">Mouse-ear cress</name>
    <dbReference type="NCBI Taxonomy" id="3702"/>
    <lineage>
        <taxon>Eukaryota</taxon>
        <taxon>Viridiplantae</taxon>
        <taxon>Streptophyta</taxon>
        <taxon>Embryophyta</taxon>
        <taxon>Tracheophyta</taxon>
        <taxon>Spermatophyta</taxon>
        <taxon>Magnoliopsida</taxon>
        <taxon>eudicotyledons</taxon>
        <taxon>Gunneridae</taxon>
        <taxon>Pentapetalae</taxon>
        <taxon>rosids</taxon>
        <taxon>malvids</taxon>
        <taxon>Brassicales</taxon>
        <taxon>Brassicaceae</taxon>
        <taxon>Camelineae</taxon>
        <taxon>Arabidopsis</taxon>
    </lineage>
</organism>
<dbReference type="EMBL" id="AL391148">
    <property type="protein sequence ID" value="CAC01863.1"/>
    <property type="molecule type" value="Genomic_DNA"/>
</dbReference>
<dbReference type="EMBL" id="CP002688">
    <property type="protein sequence ID" value="AED92262.1"/>
    <property type="molecule type" value="Genomic_DNA"/>
</dbReference>
<dbReference type="EMBL" id="AY062558">
    <property type="protein sequence ID" value="AAL32636.1"/>
    <property type="molecule type" value="mRNA"/>
</dbReference>
<dbReference type="EMBL" id="BT003380">
    <property type="protein sequence ID" value="AAO30043.1"/>
    <property type="molecule type" value="mRNA"/>
</dbReference>
<dbReference type="PIR" id="T51492">
    <property type="entry name" value="T51492"/>
</dbReference>
<dbReference type="RefSeq" id="NP_197126.1">
    <property type="nucleotide sequence ID" value="NM_121627.4"/>
</dbReference>
<dbReference type="FunCoup" id="Q9LF06">
    <property type="interactions" value="153"/>
</dbReference>
<dbReference type="IntAct" id="Q9LF06">
    <property type="interactions" value="1"/>
</dbReference>
<dbReference type="STRING" id="3702.Q9LF06"/>
<dbReference type="PaxDb" id="3702-AT5G16220.1"/>
<dbReference type="ProteomicsDB" id="177053"/>
<dbReference type="EnsemblPlants" id="AT5G16220.1">
    <property type="protein sequence ID" value="AT5G16220.1"/>
    <property type="gene ID" value="AT5G16220"/>
</dbReference>
<dbReference type="GeneID" id="831481"/>
<dbReference type="Gramene" id="AT5G16220.1">
    <property type="protein sequence ID" value="AT5G16220.1"/>
    <property type="gene ID" value="AT5G16220"/>
</dbReference>
<dbReference type="KEGG" id="ath:AT5G16220"/>
<dbReference type="Araport" id="AT5G16220"/>
<dbReference type="TAIR" id="AT5G16220"/>
<dbReference type="eggNOG" id="ENOG502QWAH">
    <property type="taxonomic scope" value="Eukaryota"/>
</dbReference>
<dbReference type="HOGENOM" id="CLU_042348_0_0_1"/>
<dbReference type="InParanoid" id="Q9LF06"/>
<dbReference type="OMA" id="ICGQESM"/>
<dbReference type="OrthoDB" id="1720031at2759"/>
<dbReference type="PRO" id="PR:Q9LF06"/>
<dbReference type="Proteomes" id="UP000006548">
    <property type="component" value="Chromosome 5"/>
</dbReference>
<dbReference type="ExpressionAtlas" id="Q9LF06">
    <property type="expression patterns" value="baseline and differential"/>
</dbReference>
<dbReference type="GO" id="GO:0012505">
    <property type="term" value="C:endomembrane system"/>
    <property type="evidence" value="ECO:0007669"/>
    <property type="project" value="UniProtKB-SubCell"/>
</dbReference>
<dbReference type="GO" id="GO:0043229">
    <property type="term" value="C:intracellular organelle"/>
    <property type="evidence" value="ECO:0000314"/>
    <property type="project" value="UniProtKB"/>
</dbReference>
<dbReference type="GO" id="GO:0005886">
    <property type="term" value="C:plasma membrane"/>
    <property type="evidence" value="ECO:0000314"/>
    <property type="project" value="UniProtKB"/>
</dbReference>
<dbReference type="GO" id="GO:0042802">
    <property type="term" value="F:identical protein binding"/>
    <property type="evidence" value="ECO:0000314"/>
    <property type="project" value="UniProtKB"/>
</dbReference>
<dbReference type="GO" id="GO:0042803">
    <property type="term" value="F:protein homodimerization activity"/>
    <property type="evidence" value="ECO:0000314"/>
    <property type="project" value="UniProtKB"/>
</dbReference>
<dbReference type="CDD" id="cd06410">
    <property type="entry name" value="PB1_UP2"/>
    <property type="match status" value="1"/>
</dbReference>
<dbReference type="InterPro" id="IPR053198">
    <property type="entry name" value="Gynoecium_Dev_Regulator"/>
</dbReference>
<dbReference type="InterPro" id="IPR000270">
    <property type="entry name" value="PB1_dom"/>
</dbReference>
<dbReference type="PANTHER" id="PTHR31066">
    <property type="entry name" value="OS05G0427100 PROTEIN-RELATED"/>
    <property type="match status" value="1"/>
</dbReference>
<dbReference type="PANTHER" id="PTHR31066:SF57">
    <property type="entry name" value="PROTEIN PAL OF QUIRKY"/>
    <property type="match status" value="1"/>
</dbReference>
<dbReference type="Pfam" id="PF00564">
    <property type="entry name" value="PB1"/>
    <property type="match status" value="1"/>
</dbReference>
<dbReference type="SMART" id="SM00666">
    <property type="entry name" value="PB1"/>
    <property type="match status" value="1"/>
</dbReference>
<dbReference type="SUPFAM" id="SSF54277">
    <property type="entry name" value="CAD &amp; PB1 domains"/>
    <property type="match status" value="1"/>
</dbReference>
<evidence type="ECO:0000255" key="1"/>
<evidence type="ECO:0000256" key="2">
    <source>
        <dbReference type="SAM" id="MobiDB-lite"/>
    </source>
</evidence>
<evidence type="ECO:0000269" key="3">
    <source>
    </source>
</evidence>
<evidence type="ECO:0000303" key="4">
    <source>
    </source>
</evidence>
<evidence type="ECO:0000312" key="5">
    <source>
        <dbReference type="Araport" id="AT5G16220"/>
    </source>
</evidence>
<evidence type="ECO:0000312" key="6">
    <source>
        <dbReference type="EMBL" id="CAC01863.1"/>
    </source>
</evidence>
<proteinExistence type="evidence at protein level"/>
<accession>Q9LF06</accession>
<protein>
    <recommendedName>
        <fullName evidence="4">Protein PAL OF QUIRKY</fullName>
    </recommendedName>
</protein>
<name>POQ_ARATH</name>
<feature type="signal peptide" evidence="1">
    <location>
        <begin position="1"/>
        <end position="14"/>
    </location>
</feature>
<feature type="chain" id="PRO_0000457910" description="Protein PAL OF QUIRKY">
    <location>
        <begin position="15"/>
        <end position="476"/>
    </location>
</feature>
<feature type="region of interest" description="Disordered" evidence="2">
    <location>
        <begin position="204"/>
        <end position="256"/>
    </location>
</feature>
<feature type="compositionally biased region" description="Gly residues" evidence="2">
    <location>
        <begin position="212"/>
        <end position="222"/>
    </location>
</feature>
<feature type="compositionally biased region" description="Low complexity" evidence="2">
    <location>
        <begin position="233"/>
        <end position="252"/>
    </location>
</feature>
<sequence>MTTVSSAFATVAEGAKVVTPRWKKNERNGKLRVMCRYGGSIVSPPQTKSPRYVGGDTRIVAIPSSAETSFASLVSHLTVTLKISYPFKVKYQLPDQELDSLISVEADEDVQIMMEEHGYLSSESSIPQSRIRLFLFPLKSQQSNEAGASQGDSDQCKVETDIDWLGIEESNKPIREELTQPVLQHPKTEMWFVDALKSVEMMQTRRTNSGTSGSGDGNGGICGQESMMLETNSSFGSTSSSVSSSNLPPIKSSGEDNIANSQVKFAPIESVTSNDNSAVTPIPSHELPSHSHAFENKPSSNLYVAELNRPVPVPISGYPPFMNQAQQQHIQVIYTGQPYITGNSPMTLPATAYHHTNHVYYQRPPQPYPIYYIPVEQYSSRHVQALPVKPSTVLNYHQVDSPVVRTSSPLAPEFSSQVYPLSKPVDSSVQTSSEATLNTTSRDAFIYNTDVDDDNDIAHAQIYKSQPPAPTLPSQY</sequence>